<organism>
    <name type="scientific">Saccharomyces cerevisiae (strain RM11-1a)</name>
    <name type="common">Baker's yeast</name>
    <dbReference type="NCBI Taxonomy" id="285006"/>
    <lineage>
        <taxon>Eukaryota</taxon>
        <taxon>Fungi</taxon>
        <taxon>Dikarya</taxon>
        <taxon>Ascomycota</taxon>
        <taxon>Saccharomycotina</taxon>
        <taxon>Saccharomycetes</taxon>
        <taxon>Saccharomycetales</taxon>
        <taxon>Saccharomycetaceae</taxon>
        <taxon>Saccharomyces</taxon>
    </lineage>
</organism>
<evidence type="ECO:0000250" key="1"/>
<evidence type="ECO:0000255" key="2"/>
<evidence type="ECO:0000255" key="3">
    <source>
        <dbReference type="PROSITE-ProRule" id="PRU00409"/>
    </source>
</evidence>
<evidence type="ECO:0000255" key="4">
    <source>
        <dbReference type="PROSITE-ProRule" id="PRU01066"/>
    </source>
</evidence>
<evidence type="ECO:0000255" key="5">
    <source>
        <dbReference type="PROSITE-ProRule" id="PRU01136"/>
    </source>
</evidence>
<evidence type="ECO:0000255" key="6">
    <source>
        <dbReference type="PROSITE-ProRule" id="PRU01137"/>
    </source>
</evidence>
<evidence type="ECO:0000255" key="7">
    <source>
        <dbReference type="PROSITE-ProRule" id="PRU01138"/>
    </source>
</evidence>
<evidence type="ECO:0000305" key="8"/>
<keyword id="KW-0067">ATP-binding</keyword>
<keyword id="KW-0092">Biotin</keyword>
<keyword id="KW-0275">Fatty acid biosynthesis</keyword>
<keyword id="KW-0276">Fatty acid metabolism</keyword>
<keyword id="KW-0436">Ligase</keyword>
<keyword id="KW-0444">Lipid biosynthesis</keyword>
<keyword id="KW-0443">Lipid metabolism</keyword>
<keyword id="KW-0496">Mitochondrion</keyword>
<keyword id="KW-0511">Multifunctional enzyme</keyword>
<keyword id="KW-0547">Nucleotide-binding</keyword>
<keyword id="KW-0809">Transit peptide</keyword>
<name>HFA1_YEAS1</name>
<feature type="transit peptide" description="Mitochondrion" evidence="2">
    <location>
        <begin position="1"/>
        <end position="104"/>
    </location>
</feature>
<feature type="chain" id="PRO_0000392099" description="Acetyl-CoA carboxylase, mitochondrial">
    <location>
        <begin position="105"/>
        <end position="2273"/>
    </location>
</feature>
<feature type="domain" description="Biotin carboxylation">
    <location>
        <begin position="134"/>
        <end position="635"/>
    </location>
</feature>
<feature type="domain" description="ATP-grasp" evidence="3">
    <location>
        <begin position="292"/>
        <end position="484"/>
    </location>
</feature>
<feature type="domain" description="Biotinyl-binding" evidence="4">
    <location>
        <begin position="763"/>
        <end position="837"/>
    </location>
</feature>
<feature type="domain" description="CoA carboxyltransferase N-terminal" evidence="5">
    <location>
        <begin position="1532"/>
        <end position="1867"/>
    </location>
</feature>
<feature type="domain" description="CoA carboxyltransferase C-terminal" evidence="6">
    <location>
        <begin position="1871"/>
        <end position="2187"/>
    </location>
</feature>
<feature type="region of interest" description="Carboxyltransferase" evidence="7">
    <location>
        <begin position="1532"/>
        <end position="2187"/>
    </location>
</feature>
<feature type="active site" evidence="1">
    <location>
        <position position="459"/>
    </location>
</feature>
<feature type="binding site" evidence="3">
    <location>
        <begin position="332"/>
        <end position="337"/>
    </location>
    <ligand>
        <name>ATP</name>
        <dbReference type="ChEBI" id="CHEBI:30616"/>
    </ligand>
</feature>
<feature type="binding site" evidence="1">
    <location>
        <position position="1776"/>
    </location>
    <ligand>
        <name>CoA</name>
        <dbReference type="ChEBI" id="CHEBI:57287"/>
    </ligand>
</feature>
<feature type="binding site" evidence="1">
    <location>
        <position position="2080"/>
    </location>
    <ligand>
        <name>CoA</name>
        <dbReference type="ChEBI" id="CHEBI:57287"/>
    </ligand>
</feature>
<feature type="binding site" evidence="1">
    <location>
        <position position="2082"/>
    </location>
    <ligand>
        <name>CoA</name>
        <dbReference type="ChEBI" id="CHEBI:57287"/>
    </ligand>
</feature>
<feature type="modified residue" description="N6-biotinyllysine" evidence="1 4">
    <location>
        <position position="804"/>
    </location>
</feature>
<reference key="1">
    <citation type="submission" date="2005-03" db="EMBL/GenBank/DDBJ databases">
        <title>Annotation of the Saccharomyces cerevisiae RM11-1a genome.</title>
        <authorList>
            <consortium name="The Broad Institute Genome Sequencing Platform"/>
            <person name="Birren B.W."/>
            <person name="Lander E.S."/>
            <person name="Galagan J.E."/>
            <person name="Nusbaum C."/>
            <person name="Devon K."/>
            <person name="Cuomo C."/>
            <person name="Jaffe D.B."/>
            <person name="Butler J."/>
            <person name="Alvarez P."/>
            <person name="Gnerre S."/>
            <person name="Grabherr M."/>
            <person name="Kleber M."/>
            <person name="Mauceli E.W."/>
            <person name="Brockman W."/>
            <person name="MacCallum I.A."/>
            <person name="Rounsley S."/>
            <person name="Young S.K."/>
            <person name="LaButti K."/>
            <person name="Pushparaj V."/>
            <person name="DeCaprio D."/>
            <person name="Crawford M."/>
            <person name="Koehrsen M."/>
            <person name="Engels R."/>
            <person name="Montgomery P."/>
            <person name="Pearson M."/>
            <person name="Howarth C."/>
            <person name="Larson L."/>
            <person name="Luoma S."/>
            <person name="White J."/>
            <person name="O'Leary S."/>
            <person name="Kodira C.D."/>
            <person name="Zeng Q."/>
            <person name="Yandava C."/>
            <person name="Alvarado L."/>
            <person name="Pratt S."/>
            <person name="Kruglyak L."/>
        </authorList>
    </citation>
    <scope>NUCLEOTIDE SEQUENCE [LARGE SCALE GENOMIC DNA]</scope>
    <source>
        <strain>RM11-1a</strain>
    </source>
</reference>
<dbReference type="EC" id="6.4.1.2"/>
<dbReference type="EC" id="6.3.4.14"/>
<dbReference type="EMBL" id="CH408047">
    <property type="protein sequence ID" value="EDV11698.1"/>
    <property type="status" value="ALT_INIT"/>
    <property type="molecule type" value="Genomic_DNA"/>
</dbReference>
<dbReference type="SMR" id="B3LM95"/>
<dbReference type="HOGENOM" id="CLU_000395_5_0_1"/>
<dbReference type="OrthoDB" id="24338at4893"/>
<dbReference type="UniPathway" id="UPA00655">
    <property type="reaction ID" value="UER00711"/>
</dbReference>
<dbReference type="Proteomes" id="UP000008335">
    <property type="component" value="Unassembled WGS sequence"/>
</dbReference>
<dbReference type="GO" id="GO:0005739">
    <property type="term" value="C:mitochondrion"/>
    <property type="evidence" value="ECO:0007669"/>
    <property type="project" value="UniProtKB-SubCell"/>
</dbReference>
<dbReference type="GO" id="GO:0003989">
    <property type="term" value="F:acetyl-CoA carboxylase activity"/>
    <property type="evidence" value="ECO:0007669"/>
    <property type="project" value="UniProtKB-EC"/>
</dbReference>
<dbReference type="GO" id="GO:0005524">
    <property type="term" value="F:ATP binding"/>
    <property type="evidence" value="ECO:0007669"/>
    <property type="project" value="UniProtKB-KW"/>
</dbReference>
<dbReference type="GO" id="GO:0004075">
    <property type="term" value="F:biotin carboxylase activity"/>
    <property type="evidence" value="ECO:0007669"/>
    <property type="project" value="UniProtKB-EC"/>
</dbReference>
<dbReference type="GO" id="GO:0046872">
    <property type="term" value="F:metal ion binding"/>
    <property type="evidence" value="ECO:0007669"/>
    <property type="project" value="InterPro"/>
</dbReference>
<dbReference type="GO" id="GO:0006633">
    <property type="term" value="P:fatty acid biosynthetic process"/>
    <property type="evidence" value="ECO:0007669"/>
    <property type="project" value="UniProtKB-KW"/>
</dbReference>
<dbReference type="GO" id="GO:2001295">
    <property type="term" value="P:malonyl-CoA biosynthetic process"/>
    <property type="evidence" value="ECO:0007669"/>
    <property type="project" value="UniProtKB-UniPathway"/>
</dbReference>
<dbReference type="CDD" id="cd06850">
    <property type="entry name" value="biotinyl_domain"/>
    <property type="match status" value="1"/>
</dbReference>
<dbReference type="FunFam" id="2.40.460.10:FF:000001">
    <property type="entry name" value="Acetyl-CoA carboxylase 1"/>
    <property type="match status" value="1"/>
</dbReference>
<dbReference type="FunFam" id="2.40.50.100:FF:000005">
    <property type="entry name" value="Acetyl-CoA carboxylase 1"/>
    <property type="match status" value="1"/>
</dbReference>
<dbReference type="FunFam" id="3.90.1770.10:FF:000001">
    <property type="entry name" value="acetyl-CoA carboxylase 1"/>
    <property type="match status" value="1"/>
</dbReference>
<dbReference type="FunFam" id="3.30.1490.20:FF:000003">
    <property type="entry name" value="acetyl-CoA carboxylase isoform X1"/>
    <property type="match status" value="1"/>
</dbReference>
<dbReference type="FunFam" id="3.40.50.20:FF:000005">
    <property type="entry name" value="acetyl-CoA carboxylase isoform X2"/>
    <property type="match status" value="1"/>
</dbReference>
<dbReference type="FunFam" id="3.90.226.10:FF:000010">
    <property type="entry name" value="acetyl-CoA carboxylase isoform X2"/>
    <property type="match status" value="1"/>
</dbReference>
<dbReference type="Gene3D" id="2.40.50.100">
    <property type="match status" value="1"/>
</dbReference>
<dbReference type="Gene3D" id="3.40.50.20">
    <property type="match status" value="1"/>
</dbReference>
<dbReference type="Gene3D" id="3.90.226.10">
    <property type="entry name" value="2-enoyl-CoA Hydratase, Chain A, domain 1"/>
    <property type="match status" value="2"/>
</dbReference>
<dbReference type="Gene3D" id="3.30.1490.20">
    <property type="entry name" value="ATP-grasp fold, A domain"/>
    <property type="match status" value="1"/>
</dbReference>
<dbReference type="Gene3D" id="3.30.470.20">
    <property type="entry name" value="ATP-grasp fold, B domain"/>
    <property type="match status" value="1"/>
</dbReference>
<dbReference type="Gene3D" id="2.40.460.10">
    <property type="entry name" value="Biotin dependent carboxylase carboxyltransferase"/>
    <property type="match status" value="1"/>
</dbReference>
<dbReference type="Gene3D" id="3.90.1770.10">
    <property type="entry name" value="PreATP-grasp domain"/>
    <property type="match status" value="1"/>
</dbReference>
<dbReference type="InterPro" id="IPR049076">
    <property type="entry name" value="ACCA"/>
</dbReference>
<dbReference type="InterPro" id="IPR049074">
    <property type="entry name" value="ACCA_BT"/>
</dbReference>
<dbReference type="InterPro" id="IPR034733">
    <property type="entry name" value="AcCoA_carboxyl_beta"/>
</dbReference>
<dbReference type="InterPro" id="IPR013537">
    <property type="entry name" value="AcCoA_COase_cen"/>
</dbReference>
<dbReference type="InterPro" id="IPR011761">
    <property type="entry name" value="ATP-grasp"/>
</dbReference>
<dbReference type="InterPro" id="IPR013815">
    <property type="entry name" value="ATP_grasp_subdomain_1"/>
</dbReference>
<dbReference type="InterPro" id="IPR005481">
    <property type="entry name" value="BC-like_N"/>
</dbReference>
<dbReference type="InterPro" id="IPR001882">
    <property type="entry name" value="Biotin_BS"/>
</dbReference>
<dbReference type="InterPro" id="IPR011764">
    <property type="entry name" value="Biotin_carboxylation_dom"/>
</dbReference>
<dbReference type="InterPro" id="IPR005482">
    <property type="entry name" value="Biotin_COase_C"/>
</dbReference>
<dbReference type="InterPro" id="IPR000089">
    <property type="entry name" value="Biotin_lipoyl"/>
</dbReference>
<dbReference type="InterPro" id="IPR005479">
    <property type="entry name" value="CbamoylP_synth_lsu-like_ATP-bd"/>
</dbReference>
<dbReference type="InterPro" id="IPR029045">
    <property type="entry name" value="ClpP/crotonase-like_dom_sf"/>
</dbReference>
<dbReference type="InterPro" id="IPR011763">
    <property type="entry name" value="COA_CT_C"/>
</dbReference>
<dbReference type="InterPro" id="IPR011762">
    <property type="entry name" value="COA_CT_N"/>
</dbReference>
<dbReference type="InterPro" id="IPR016185">
    <property type="entry name" value="PreATP-grasp_dom_sf"/>
</dbReference>
<dbReference type="InterPro" id="IPR011054">
    <property type="entry name" value="Rudment_hybrid_motif"/>
</dbReference>
<dbReference type="InterPro" id="IPR011053">
    <property type="entry name" value="Single_hybrid_motif"/>
</dbReference>
<dbReference type="PANTHER" id="PTHR45728:SF3">
    <property type="entry name" value="ACETYL-COA CARBOXYLASE"/>
    <property type="match status" value="1"/>
</dbReference>
<dbReference type="PANTHER" id="PTHR45728">
    <property type="entry name" value="ACETYL-COA CARBOXYLASE, ISOFORM A"/>
    <property type="match status" value="1"/>
</dbReference>
<dbReference type="Pfam" id="PF08326">
    <property type="entry name" value="ACC_central"/>
    <property type="match status" value="1"/>
</dbReference>
<dbReference type="Pfam" id="PF21385">
    <property type="entry name" value="ACCA_BT"/>
    <property type="match status" value="1"/>
</dbReference>
<dbReference type="Pfam" id="PF02785">
    <property type="entry name" value="Biotin_carb_C"/>
    <property type="match status" value="1"/>
</dbReference>
<dbReference type="Pfam" id="PF00289">
    <property type="entry name" value="Biotin_carb_N"/>
    <property type="match status" value="1"/>
</dbReference>
<dbReference type="Pfam" id="PF00364">
    <property type="entry name" value="Biotin_lipoyl"/>
    <property type="match status" value="1"/>
</dbReference>
<dbReference type="Pfam" id="PF01039">
    <property type="entry name" value="Carboxyl_trans"/>
    <property type="match status" value="1"/>
</dbReference>
<dbReference type="Pfam" id="PF02786">
    <property type="entry name" value="CPSase_L_D2"/>
    <property type="match status" value="1"/>
</dbReference>
<dbReference type="SMART" id="SM00878">
    <property type="entry name" value="Biotin_carb_C"/>
    <property type="match status" value="1"/>
</dbReference>
<dbReference type="SUPFAM" id="SSF52096">
    <property type="entry name" value="ClpP/crotonase"/>
    <property type="match status" value="2"/>
</dbReference>
<dbReference type="SUPFAM" id="SSF56059">
    <property type="entry name" value="Glutathione synthetase ATP-binding domain-like"/>
    <property type="match status" value="1"/>
</dbReference>
<dbReference type="SUPFAM" id="SSF52440">
    <property type="entry name" value="PreATP-grasp domain"/>
    <property type="match status" value="1"/>
</dbReference>
<dbReference type="SUPFAM" id="SSF51246">
    <property type="entry name" value="Rudiment single hybrid motif"/>
    <property type="match status" value="1"/>
</dbReference>
<dbReference type="SUPFAM" id="SSF51230">
    <property type="entry name" value="Single hybrid motif"/>
    <property type="match status" value="1"/>
</dbReference>
<dbReference type="PROSITE" id="PS50975">
    <property type="entry name" value="ATP_GRASP"/>
    <property type="match status" value="1"/>
</dbReference>
<dbReference type="PROSITE" id="PS50979">
    <property type="entry name" value="BC"/>
    <property type="match status" value="1"/>
</dbReference>
<dbReference type="PROSITE" id="PS00188">
    <property type="entry name" value="BIOTIN"/>
    <property type="match status" value="1"/>
</dbReference>
<dbReference type="PROSITE" id="PS50968">
    <property type="entry name" value="BIOTINYL_LIPOYL"/>
    <property type="match status" value="1"/>
</dbReference>
<dbReference type="PROSITE" id="PS50989">
    <property type="entry name" value="COA_CT_CTER"/>
    <property type="match status" value="1"/>
</dbReference>
<dbReference type="PROSITE" id="PS50980">
    <property type="entry name" value="COA_CT_NTER"/>
    <property type="match status" value="1"/>
</dbReference>
<dbReference type="PROSITE" id="PS00866">
    <property type="entry name" value="CPSASE_1"/>
    <property type="match status" value="1"/>
</dbReference>
<dbReference type="PROSITE" id="PS00867">
    <property type="entry name" value="CPSASE_2"/>
    <property type="match status" value="1"/>
</dbReference>
<proteinExistence type="inferred from homology"/>
<sequence length="2273" mass="259111">KGKTITHGQSWGARRIHSHFYITIFTITCIRIGQYKLALYLDPYRFYNITGSQIVRLKGQRPEYRKRIFAHSYRHSSRIGLNFPSRRRYSNYVDRGNIHKHTRLPPQFIGLNTVESAQPSILRDFVDLRGGHTVISKILIANNGIAAVKEMRSIRKWAYETFNDEKIIQFVVMATPDDLHANSEYIRMADQYVQVPGGTNNNNYANIDLILDVAEQTDVDAVWAGWGHASENPCLPELLASSQRKILFIGPPGRAMRSLGDKISSTIVAQSAKIPCIPWSGSHIDTIHIDNKTNFVSVPDDVYVRGCCSSPEDALEKAKLIGFPVMIKASEGGGGKGIRRVDNQDDFIALYRQAVNETPGSPMFVMKVVTDARHLEVQLLADQYGTNITLFGRDCSIQRRHQKIIEEAPVTITKPETFQRMERAAIRLGELVGYVSAGTVEYLYSPKDDKFYFLELNPRLQVEHPTTEMISGVNLPATQLQIAMGIPMHMISDIRKLYGLDPTGTSYIDFKNLKRPSPKGHCISCRITSEDPNEGFKPSTGKIHELNFRSSSNVWGYFSVGNNGAIHSFSDSQFGHIFAVGNDRQDAKQNMVLALKDFSIRGEFKTPIEYLTELLETRDFESNNISTGWLDDLILKNLSSDSKLDPTLAIICGAAMKAYVFTEKVRNKYLELLRRGQVPPKDFLKTKFPVDFIFDNNKYLFNVAQSSEEQFILSINKSQCEVNVQKLSSDCLLISVDGKCHTVYWKDDIRGTRLSIDSNTIFLEAELNPTQVISPTPGKLVKYLVRSGDHVFAGQQYAEIEIMKMQMPLVAKSDGVIELLRQPGSIIEAGDVIAKLTLDSPSKANESSLYRGELPVLGPPLIEGSRPNHKLRVLINRLENILNGYHENSGIETTLKELIKILRDGRLPYSEWDSQISTVRNRLPRQLNEGLGNLVKKSVSFPAKELHKLMKRYLEENTNDHVVYVALQPLLKISERYSEGLANHECEIFLKLIKKYYAVEKIFENHDIHEERNLLNLRRKDLTNLKEILCISLSHANIVAKNKLVTAILHEYEPLCQDSSKMSLKFRAVIHDLASLESKWAKEVAVKARSVLLRGIFPPIKKRKEHIKTLLQLHIKDTGAENIHSRNIYSCMRDFGNLIHSNLIQLQDLFFFFGHQDTALSSIASEIYARYAYGNYQLKSIKIHKGAPDLLMSWQFSSLRNYLVNPDGESDGFTKLSKPPSTSGKSSANSFGLLVNMRALESLEKTLDEVYEQIHIPEERLSSGENSLIVNILSPIRYRSENDLIKTLKIKLHENERGLSKLKVNRITFAFIAANAPAVKFYSFDGTTYDEIPQIRNMDPSYEAPLELGKMSNYKIRSLPTYDSSIRIFEGISKFTPLDKRFFVRKIINSFMYNDQKTTEENLKAEINAQVVYMLEHLGAVDISNSDLNHIFLSFNTVLNIPVHRLEEIVSTILKTHETRLFQERITDVEICISVECLETKKPAPLRLLISNKSGYVVKIETYYEKIGKNGNLILEPCSEQSHYSQKSLSLPYSVKDWLQPKRYKAQFMGTTYVYDFPGLFHQAAIQQWKRYFPKHKLNDSFFSWVELIEQNGNLIKVNREPGLNNIGMVAFEIMVQTPEYPEGRNMIVISNDITYNIGSFGPREDLFFDRVTNYARERGIPRIYLAANSGAKLGIAEELIPLFRVAWNDPSDPTKGFQYLYLAPKDMQLLKDSGKGNSVVVEHKMVYGEERYIIKAIVGFEEGLGVECLQGSGLIAGATSKAYREIFTITAVTCRSVGIGSYLVRLGQRTIQVEDKPIILTGASAINKVLGTDIYISNLQIGGTQIMYKNGIAHLTASNDMKAIEKIMTWLSYVPAKRDMSPPLLETMDRWDRDVDFKPAKQVPYEARWLIEGKWDSNNNFQSGLFDKDSFFETLSGWAKGVIVGRARLGGIPVGVIAVETKTIEEIIPADPANLDSSEFSVKEAGQVWYPNSAFKTAQTINDFNYGEQLPLIILANWRGFSGGQRDMYNEVLKYGSFIVDALVDYKQPILIYIPPFGELRGGSWVVIDPTINPEQMEMYADVESRGGVLEPDGVVSIKYRKEKMIETMIRLDSTYGHLRRTLTEKKLSLEKQNDLTKRLKIRERQLIPIYNQISIQFADLHDRSTRMLVKGVIRNELEWKKSRRFLYWRLRRRLNEGQVIKRLQKKTCDNKTKMKYDDLLKIVQSWYNDLDVNDDRAVVEFIERNSKKIDKNIEEFEISLLIDELKKKFEDRRGNIVLEELTRLVDSKRKR</sequence>
<accession>B3LM95</accession>
<comment type="function">
    <text evidence="1">Catalyzes the rate-limiting reaction in the mitochondrial fatty acid synthesis (FAS) type II pathway. Responsible for the production of the mitochondrial malonyl-CoA, used for the biosynthesis of the cofactor lipoic acid. This protein carries three functions: biotin carboxyl carrier protein, biotin carboxylase, and carboxyltransferase (By similarity).</text>
</comment>
<comment type="catalytic activity">
    <reaction>
        <text>hydrogencarbonate + acetyl-CoA + ATP = malonyl-CoA + ADP + phosphate + H(+)</text>
        <dbReference type="Rhea" id="RHEA:11308"/>
        <dbReference type="ChEBI" id="CHEBI:15378"/>
        <dbReference type="ChEBI" id="CHEBI:17544"/>
        <dbReference type="ChEBI" id="CHEBI:30616"/>
        <dbReference type="ChEBI" id="CHEBI:43474"/>
        <dbReference type="ChEBI" id="CHEBI:57288"/>
        <dbReference type="ChEBI" id="CHEBI:57384"/>
        <dbReference type="ChEBI" id="CHEBI:456216"/>
        <dbReference type="EC" id="6.4.1.2"/>
    </reaction>
</comment>
<comment type="catalytic activity">
    <reaction>
        <text>N(6)-biotinyl-L-lysyl-[protein] + hydrogencarbonate + ATP = N(6)-carboxybiotinyl-L-lysyl-[protein] + ADP + phosphate + H(+)</text>
        <dbReference type="Rhea" id="RHEA:13501"/>
        <dbReference type="Rhea" id="RHEA-COMP:10505"/>
        <dbReference type="Rhea" id="RHEA-COMP:10506"/>
        <dbReference type="ChEBI" id="CHEBI:15378"/>
        <dbReference type="ChEBI" id="CHEBI:17544"/>
        <dbReference type="ChEBI" id="CHEBI:30616"/>
        <dbReference type="ChEBI" id="CHEBI:43474"/>
        <dbReference type="ChEBI" id="CHEBI:83144"/>
        <dbReference type="ChEBI" id="CHEBI:83145"/>
        <dbReference type="ChEBI" id="CHEBI:456216"/>
        <dbReference type="EC" id="6.3.4.14"/>
    </reaction>
</comment>
<comment type="cofactor">
    <cofactor evidence="1">
        <name>biotin</name>
        <dbReference type="ChEBI" id="CHEBI:57586"/>
    </cofactor>
</comment>
<comment type="pathway">
    <text>Lipid metabolism; malonyl-CoA biosynthesis; malonyl-CoA from acetyl-CoA: step 1/1.</text>
</comment>
<comment type="subcellular location">
    <subcellularLocation>
        <location evidence="1">Mitochondrion</location>
    </subcellularLocation>
</comment>
<comment type="caution">
    <text evidence="8">The reading frame from which this protein is translated has no Met initiation codon near to the 5'-end. However, it is not a pseudogene. It has been shown that at least 72 residues upstream of the first in-frame start codon (Met-151) are required for function and proper subcellular location. May be translated by means of alternative initiation codon usage, programmed translational frame shifting, or mRNA editing.</text>
</comment>
<comment type="sequence caution" evidence="8">
    <conflict type="erroneous initiation">
        <sequence resource="EMBL-CDS" id="EDV11698"/>
    </conflict>
</comment>
<protein>
    <recommendedName>
        <fullName>Acetyl-CoA carboxylase, mitochondrial</fullName>
        <shortName>ACC</shortName>
        <ecNumber>6.4.1.2</ecNumber>
    </recommendedName>
    <domain>
        <recommendedName>
            <fullName>Biotin carboxylase</fullName>
            <ecNumber>6.3.4.14</ecNumber>
        </recommendedName>
    </domain>
</protein>
<gene>
    <name type="primary">HFA1</name>
    <name type="ORF">SCRG_02101</name>
</gene>